<sequence>MKEPLIEISALNRIFQAGEQQVAVLKDIDLKIYPGEMVAIMGTSGSGKSTLMNILGCLDRPSSGSYRISGRETRELDDNELAALRRNHFGFIFQRYHLLSHLDALGNAELAAVYAGVSKSSRRERAHMLLSRLGLEERCEHKPSQLSGGQQQRVSIARALMNGGEVILADEPTGALDTRSGQEVMAVLRELHQQGHTVIIVTHDPLVAAKAERIIEIQDGEIIADRVNPASELETSASSATDAASAAGRKETRGAWLGRFSEAFKMAWVAMTSHRLRTLLTMLGIIIGITAVVSIVAIGEGAKQKVISDINSIGVNTIEIFPGKDWGDERAAAIDTLVAADVEALQAQPFVDSVTPSIVNSQQLRYRNVAVNVNINAVGEQFFRVKGLVVAEGRPLLREDIRTQAQVVVIDSNTRGKLFAAEDDPIGKVILIGASPWTVIGVAEDKSDMFGGGGNLSVWMPYSSATTRLIGRQNFSSIIVRTPDGLSSAVAEQGIIRLLTVRHGVKDFFTFSTDSILKAVEKTTTTLTLLVSSIAVISLIVGGIGVMNIMLVSVTERTREIGIRMAVGARQSDILQQFLIEAVMVCLIGGGIGILLSFGVGALFSLLVQDMQMSFSVTAIVSAVVCSSLIGVLFGFLPARNAARLDPIEALARE</sequence>
<gene>
    <name evidence="1" type="primary">macB</name>
    <name type="ordered locus">HCH_01212</name>
</gene>
<organism>
    <name type="scientific">Hahella chejuensis (strain KCTC 2396)</name>
    <dbReference type="NCBI Taxonomy" id="349521"/>
    <lineage>
        <taxon>Bacteria</taxon>
        <taxon>Pseudomonadati</taxon>
        <taxon>Pseudomonadota</taxon>
        <taxon>Gammaproteobacteria</taxon>
        <taxon>Oceanospirillales</taxon>
        <taxon>Hahellaceae</taxon>
        <taxon>Hahella</taxon>
    </lineage>
</organism>
<keyword id="KW-0046">Antibiotic resistance</keyword>
<keyword id="KW-0067">ATP-binding</keyword>
<keyword id="KW-0997">Cell inner membrane</keyword>
<keyword id="KW-1003">Cell membrane</keyword>
<keyword id="KW-0472">Membrane</keyword>
<keyword id="KW-0547">Nucleotide-binding</keyword>
<keyword id="KW-1185">Reference proteome</keyword>
<keyword id="KW-1278">Translocase</keyword>
<keyword id="KW-0812">Transmembrane</keyword>
<keyword id="KW-1133">Transmembrane helix</keyword>
<keyword id="KW-0813">Transport</keyword>
<accession>Q2SMN9</accession>
<feature type="chain" id="PRO_0000269944" description="Macrolide export ATP-binding/permease protein MacB">
    <location>
        <begin position="1"/>
        <end position="654"/>
    </location>
</feature>
<feature type="transmembrane region" description="Helical" evidence="1">
    <location>
        <begin position="279"/>
        <end position="299"/>
    </location>
</feature>
<feature type="transmembrane region" description="Helical" evidence="1">
    <location>
        <begin position="534"/>
        <end position="554"/>
    </location>
</feature>
<feature type="transmembrane region" description="Helical" evidence="1">
    <location>
        <begin position="584"/>
        <end position="604"/>
    </location>
</feature>
<feature type="transmembrane region" description="Helical" evidence="1">
    <location>
        <begin position="617"/>
        <end position="637"/>
    </location>
</feature>
<feature type="domain" description="ABC transporter" evidence="1">
    <location>
        <begin position="6"/>
        <end position="244"/>
    </location>
</feature>
<feature type="binding site" evidence="1">
    <location>
        <begin position="42"/>
        <end position="49"/>
    </location>
    <ligand>
        <name>ATP</name>
        <dbReference type="ChEBI" id="CHEBI:30616"/>
    </ligand>
</feature>
<name>MACB_HAHCH</name>
<dbReference type="EC" id="7.6.2.-" evidence="1"/>
<dbReference type="EMBL" id="CP000155">
    <property type="protein sequence ID" value="ABC28085.1"/>
    <property type="molecule type" value="Genomic_DNA"/>
</dbReference>
<dbReference type="RefSeq" id="WP_011395158.1">
    <property type="nucleotide sequence ID" value="NC_007645.1"/>
</dbReference>
<dbReference type="SMR" id="Q2SMN9"/>
<dbReference type="STRING" id="349521.HCH_01212"/>
<dbReference type="KEGG" id="hch:HCH_01212"/>
<dbReference type="eggNOG" id="COG0577">
    <property type="taxonomic scope" value="Bacteria"/>
</dbReference>
<dbReference type="eggNOG" id="COG1136">
    <property type="taxonomic scope" value="Bacteria"/>
</dbReference>
<dbReference type="HOGENOM" id="CLU_000604_78_1_6"/>
<dbReference type="OrthoDB" id="9802264at2"/>
<dbReference type="Proteomes" id="UP000000238">
    <property type="component" value="Chromosome"/>
</dbReference>
<dbReference type="GO" id="GO:0005886">
    <property type="term" value="C:plasma membrane"/>
    <property type="evidence" value="ECO:0007669"/>
    <property type="project" value="UniProtKB-SubCell"/>
</dbReference>
<dbReference type="GO" id="GO:0005524">
    <property type="term" value="F:ATP binding"/>
    <property type="evidence" value="ECO:0007669"/>
    <property type="project" value="UniProtKB-KW"/>
</dbReference>
<dbReference type="GO" id="GO:0016887">
    <property type="term" value="F:ATP hydrolysis activity"/>
    <property type="evidence" value="ECO:0007669"/>
    <property type="project" value="InterPro"/>
</dbReference>
<dbReference type="GO" id="GO:0022857">
    <property type="term" value="F:transmembrane transporter activity"/>
    <property type="evidence" value="ECO:0007669"/>
    <property type="project" value="TreeGrafter"/>
</dbReference>
<dbReference type="GO" id="GO:0046677">
    <property type="term" value="P:response to antibiotic"/>
    <property type="evidence" value="ECO:0007669"/>
    <property type="project" value="UniProtKB-KW"/>
</dbReference>
<dbReference type="CDD" id="cd03255">
    <property type="entry name" value="ABC_MJ0796_LolCDE_FtsE"/>
    <property type="match status" value="1"/>
</dbReference>
<dbReference type="FunFam" id="3.40.50.300:FF:000032">
    <property type="entry name" value="Export ABC transporter ATP-binding protein"/>
    <property type="match status" value="1"/>
</dbReference>
<dbReference type="Gene3D" id="3.40.50.300">
    <property type="entry name" value="P-loop containing nucleotide triphosphate hydrolases"/>
    <property type="match status" value="1"/>
</dbReference>
<dbReference type="InterPro" id="IPR003593">
    <property type="entry name" value="AAA+_ATPase"/>
</dbReference>
<dbReference type="InterPro" id="IPR003838">
    <property type="entry name" value="ABC3_permease_C"/>
</dbReference>
<dbReference type="InterPro" id="IPR003439">
    <property type="entry name" value="ABC_transporter-like_ATP-bd"/>
</dbReference>
<dbReference type="InterPro" id="IPR017871">
    <property type="entry name" value="ABC_transporter-like_CS"/>
</dbReference>
<dbReference type="InterPro" id="IPR017911">
    <property type="entry name" value="MacB-like_ATP-bd"/>
</dbReference>
<dbReference type="InterPro" id="IPR025857">
    <property type="entry name" value="MacB_PCD"/>
</dbReference>
<dbReference type="InterPro" id="IPR050250">
    <property type="entry name" value="Macrolide_Exporter_MacB"/>
</dbReference>
<dbReference type="InterPro" id="IPR027417">
    <property type="entry name" value="P-loop_NTPase"/>
</dbReference>
<dbReference type="PANTHER" id="PTHR30572:SF7">
    <property type="entry name" value="MACROLIDE EXPORT ATP-BINDING_PERMEASE PROTEIN MACB"/>
    <property type="match status" value="1"/>
</dbReference>
<dbReference type="PANTHER" id="PTHR30572">
    <property type="entry name" value="MEMBRANE COMPONENT OF TRANSPORTER-RELATED"/>
    <property type="match status" value="1"/>
</dbReference>
<dbReference type="Pfam" id="PF00005">
    <property type="entry name" value="ABC_tran"/>
    <property type="match status" value="1"/>
</dbReference>
<dbReference type="Pfam" id="PF02687">
    <property type="entry name" value="FtsX"/>
    <property type="match status" value="1"/>
</dbReference>
<dbReference type="Pfam" id="PF12704">
    <property type="entry name" value="MacB_PCD"/>
    <property type="match status" value="1"/>
</dbReference>
<dbReference type="SMART" id="SM00382">
    <property type="entry name" value="AAA"/>
    <property type="match status" value="1"/>
</dbReference>
<dbReference type="SUPFAM" id="SSF52540">
    <property type="entry name" value="P-loop containing nucleoside triphosphate hydrolases"/>
    <property type="match status" value="1"/>
</dbReference>
<dbReference type="PROSITE" id="PS00211">
    <property type="entry name" value="ABC_TRANSPORTER_1"/>
    <property type="match status" value="1"/>
</dbReference>
<dbReference type="PROSITE" id="PS50893">
    <property type="entry name" value="ABC_TRANSPORTER_2"/>
    <property type="match status" value="1"/>
</dbReference>
<dbReference type="PROSITE" id="PS51267">
    <property type="entry name" value="MACB"/>
    <property type="match status" value="1"/>
</dbReference>
<reference key="1">
    <citation type="journal article" date="2005" name="Nucleic Acids Res.">
        <title>Genomic blueprint of Hahella chejuensis, a marine microbe producing an algicidal agent.</title>
        <authorList>
            <person name="Jeong H."/>
            <person name="Yim J.H."/>
            <person name="Lee C."/>
            <person name="Choi S.-H."/>
            <person name="Park Y.K."/>
            <person name="Yoon S.H."/>
            <person name="Hur C.-G."/>
            <person name="Kang H.-Y."/>
            <person name="Kim D."/>
            <person name="Lee H.H."/>
            <person name="Park K.H."/>
            <person name="Park S.-H."/>
            <person name="Park H.-S."/>
            <person name="Lee H.K."/>
            <person name="Oh T.K."/>
            <person name="Kim J.F."/>
        </authorList>
    </citation>
    <scope>NUCLEOTIDE SEQUENCE [LARGE SCALE GENOMIC DNA]</scope>
    <source>
        <strain>KCTC 2396</strain>
    </source>
</reference>
<protein>
    <recommendedName>
        <fullName evidence="1">Macrolide export ATP-binding/permease protein MacB</fullName>
        <ecNumber evidence="1">7.6.2.-</ecNumber>
    </recommendedName>
</protein>
<evidence type="ECO:0000255" key="1">
    <source>
        <dbReference type="HAMAP-Rule" id="MF_01720"/>
    </source>
</evidence>
<proteinExistence type="inferred from homology"/>
<comment type="function">
    <text evidence="1">Part of the tripartite efflux system MacAB-TolC. MacB is a non-canonical ABC transporter that contains transmembrane domains (TMD), which form a pore in the inner membrane, and an ATP-binding domain (NBD), which is responsible for energy generation. Confers resistance against macrolides.</text>
</comment>
<comment type="subunit">
    <text evidence="1">Homodimer. Part of the tripartite efflux system MacAB-TolC, which is composed of an inner membrane transporter, MacB, a periplasmic membrane fusion protein, MacA, and an outer membrane component, TolC. The complex forms a large protein conduit and can translocate molecules across both the inner and outer membranes. Interacts with MacA.</text>
</comment>
<comment type="subcellular location">
    <subcellularLocation>
        <location evidence="1">Cell inner membrane</location>
        <topology evidence="1">Multi-pass membrane protein</topology>
    </subcellularLocation>
</comment>
<comment type="similarity">
    <text evidence="1">Belongs to the ABC transporter superfamily. Macrolide exporter (TC 3.A.1.122) family.</text>
</comment>